<protein>
    <recommendedName>
        <fullName evidence="8">Protein Atg16l2</fullName>
    </recommendedName>
    <alternativeName>
        <fullName>APG16-like 2</fullName>
    </alternativeName>
    <alternativeName>
        <fullName>Autophagy-related protein 16-2</fullName>
    </alternativeName>
</protein>
<reference key="1">
    <citation type="journal article" date="2004" name="DNA Res.">
        <title>Prediction of the coding sequences of mouse homologues of FLJ genes: the complete nucleotide sequences of 110 mouse FLJ-homologous cDNAs identified by screening of terminal sequences of cDNA clones randomly sampled from size-fractionated libraries.</title>
        <authorList>
            <person name="Okazaki N."/>
            <person name="Kikuno R."/>
            <person name="Ohara R."/>
            <person name="Inamoto S."/>
            <person name="Koseki H."/>
            <person name="Hiraoka S."/>
            <person name="Saga Y."/>
            <person name="Kitamura H."/>
            <person name="Nakagawa T."/>
            <person name="Nagase T."/>
            <person name="Ohara O."/>
            <person name="Koga H."/>
        </authorList>
    </citation>
    <scope>NUCLEOTIDE SEQUENCE [LARGE SCALE MRNA] (ISOFORM 1)</scope>
    <source>
        <tissue>Brain</tissue>
    </source>
</reference>
<reference key="2">
    <citation type="journal article" date="2009" name="PLoS Biol.">
        <title>Lineage-specific biology revealed by a finished genome assembly of the mouse.</title>
        <authorList>
            <person name="Church D.M."/>
            <person name="Goodstadt L."/>
            <person name="Hillier L.W."/>
            <person name="Zody M.C."/>
            <person name="Goldstein S."/>
            <person name="She X."/>
            <person name="Bult C.J."/>
            <person name="Agarwala R."/>
            <person name="Cherry J.L."/>
            <person name="DiCuccio M."/>
            <person name="Hlavina W."/>
            <person name="Kapustin Y."/>
            <person name="Meric P."/>
            <person name="Maglott D."/>
            <person name="Birtle Z."/>
            <person name="Marques A.C."/>
            <person name="Graves T."/>
            <person name="Zhou S."/>
            <person name="Teague B."/>
            <person name="Potamousis K."/>
            <person name="Churas C."/>
            <person name="Place M."/>
            <person name="Herschleb J."/>
            <person name="Runnheim R."/>
            <person name="Forrest D."/>
            <person name="Amos-Landgraf J."/>
            <person name="Schwartz D.C."/>
            <person name="Cheng Z."/>
            <person name="Lindblad-Toh K."/>
            <person name="Eichler E.E."/>
            <person name="Ponting C.P."/>
        </authorList>
    </citation>
    <scope>NUCLEOTIDE SEQUENCE [LARGE SCALE GENOMIC DNA]</scope>
    <source>
        <strain>C57BL/6J</strain>
    </source>
</reference>
<reference key="3">
    <citation type="journal article" date="2004" name="Genome Res.">
        <title>The status, quality, and expansion of the NIH full-length cDNA project: the Mammalian Gene Collection (MGC).</title>
        <authorList>
            <consortium name="The MGC Project Team"/>
        </authorList>
    </citation>
    <scope>NUCLEOTIDE SEQUENCE [LARGE SCALE MRNA] (ISOFORM 2)</scope>
    <source>
        <strain>C57BL/6J</strain>
        <tissue>Brain</tissue>
    </source>
</reference>
<reference key="4">
    <citation type="journal article" date="2011" name="Autophagy">
        <title>Atg16L2, a novel isoform of mammalian Atg16L that is not essential for canonical autophagy despite forming an Atg12-5-16L2 complex.</title>
        <authorList>
            <person name="Ishibashi K."/>
            <person name="Fujita N."/>
            <person name="Kanno E."/>
            <person name="Omori H."/>
            <person name="Yoshimori T."/>
            <person name="Itoh T."/>
            <person name="Fukuda M."/>
        </authorList>
    </citation>
    <scope>NUCLEOTIDE SEQUENCE [MRNA] (ISOFORMS 1 AND 3)</scope>
    <scope>TISSUE SPECIFICITY</scope>
    <scope>SUBUNIT</scope>
    <scope>INTERACTION WITH ATG5 AND RAB33B</scope>
    <scope>SUBCELLULAR LOCATION</scope>
</reference>
<reference key="5">
    <citation type="journal article" date="2013" name="Nature">
        <title>Functional interaction between autophagy and ciliogenesis.</title>
        <authorList>
            <person name="Pampliega O."/>
            <person name="Orhon I."/>
            <person name="Patel B."/>
            <person name="Sridhar S."/>
            <person name="Diaz-Carretero A."/>
            <person name="Beau I."/>
            <person name="Codogno P."/>
            <person name="Satir B.H."/>
            <person name="Satir P."/>
            <person name="Cuervo A.M."/>
        </authorList>
    </citation>
    <scope>SUBCELLULAR LOCATION</scope>
</reference>
<reference key="6">
    <citation type="journal article" date="2019" name="J. Immunol.">
        <title>Distinct Tissue-Specific Roles for the Disease-Associated Autophagy Genes ATG16L2 and ATG16L1.</title>
        <authorList>
            <person name="Khor B."/>
            <person name="Conway K.L."/>
            <person name="Omar A.S."/>
            <person name="Biton M."/>
            <person name="Haber A.L."/>
            <person name="Rogel N."/>
            <person name="Baxt L.A."/>
            <person name="Begun J."/>
            <person name="Kuballa P."/>
            <person name="Gagnon J.D."/>
            <person name="Lassen K.G."/>
            <person name="Regev A."/>
            <person name="Xavier R.J."/>
        </authorList>
    </citation>
    <scope>DISRUPTION PHENOTYPE</scope>
    <scope>FUNCTION</scope>
</reference>
<evidence type="ECO:0000255" key="1"/>
<evidence type="ECO:0000256" key="2">
    <source>
        <dbReference type="SAM" id="MobiDB-lite"/>
    </source>
</evidence>
<evidence type="ECO:0000269" key="3">
    <source>
    </source>
</evidence>
<evidence type="ECO:0000269" key="4">
    <source>
    </source>
</evidence>
<evidence type="ECO:0000269" key="5">
    <source>
    </source>
</evidence>
<evidence type="ECO:0000303" key="6">
    <source>
    </source>
</evidence>
<evidence type="ECO:0000303" key="7">
    <source>
    </source>
</evidence>
<evidence type="ECO:0000305" key="8"/>
<gene>
    <name type="primary">Atg16l2</name>
</gene>
<comment type="function">
    <text evidence="5">May play a role in regulating epithelial homeostasis in an ATG16L1-dependent manner.</text>
</comment>
<comment type="subunit">
    <text evidence="3">Homooligomer (PubMed:22082872). Heterooligomer with ATG16L2 (PubMed:22082872). Interacts with ATG5 (PubMed:22082872). Self-oligomerizes to form a 800-kDa complex composed of ATG12-ATG5 and ATG16L2 (PubMed:22082872). Interacts with RAB33B (PubMed:22082872).</text>
</comment>
<comment type="subcellular location">
    <subcellularLocation>
        <location evidence="3">Cytoplasm</location>
        <location evidence="3">Cytosol</location>
    </subcellularLocation>
    <text evidence="4">Also localizes to discrete punctae along the ciliary axoneme.</text>
</comment>
<comment type="alternative products">
    <event type="alternative splicing"/>
    <isoform>
        <id>Q6KAU8-1</id>
        <name>1</name>
        <name evidence="7">Atg16L2 beta</name>
        <sequence type="displayed"/>
    </isoform>
    <isoform>
        <id>Q6KAU8-2</id>
        <name>2</name>
        <sequence type="described" ref="VSP_033906 VSP_033907"/>
    </isoform>
    <isoform>
        <id>Q6KAU8-3</id>
        <name>3</name>
        <name evidence="7">Atg16L2 alpha</name>
        <sequence type="described" ref="VSP_060643"/>
    </isoform>
</comment>
<comment type="tissue specificity">
    <text evidence="3">Widely expressed.</text>
</comment>
<comment type="disruption phenotype">
    <text evidence="5">ATG16L2-deficient mice are viable and born at Mendelian proportions. Deficient mice exhibit intact canonical autophagy.</text>
</comment>
<comment type="miscellaneous">
    <text evidence="3 5">Although ATG16L2 is structurally similar to ATG16L1 and is likewise able to form a complex with the autophagy proteins ATG5 and ATG12, overexpression and knockdown studies suggest that ATG16L2 is not essential for canonical autophagy.</text>
</comment>
<comment type="similarity">
    <text evidence="8">Belongs to the WD repeat ATG16 family.</text>
</comment>
<comment type="sequence caution" evidence="8">
    <conflict type="erroneous initiation">
        <sequence resource="EMBL-CDS" id="AAH60054"/>
    </conflict>
</comment>
<comment type="sequence caution" evidence="8">
    <conflict type="miscellaneous discrepancy">
        <sequence resource="EMBL-CDS" id="BAD21359"/>
    </conflict>
    <text>The sequence differs from that shown because it seems to be derived from a pre-mRNA.</text>
</comment>
<feature type="chain" id="PRO_0000337111" description="Protein Atg16l2">
    <location>
        <begin position="1"/>
        <end position="623"/>
    </location>
</feature>
<feature type="repeat" description="WD 1" evidence="1">
    <location>
        <begin position="338"/>
        <end position="377"/>
    </location>
</feature>
<feature type="repeat" description="WD 2" evidence="1">
    <location>
        <begin position="382"/>
        <end position="421"/>
    </location>
</feature>
<feature type="repeat" description="WD 3" evidence="1">
    <location>
        <begin position="424"/>
        <end position="458"/>
    </location>
</feature>
<feature type="repeat" description="WD 4" evidence="1">
    <location>
        <begin position="459"/>
        <end position="502"/>
    </location>
</feature>
<feature type="repeat" description="WD 5" evidence="1">
    <location>
        <begin position="504"/>
        <end position="543"/>
    </location>
</feature>
<feature type="repeat" description="WD 6" evidence="1">
    <location>
        <begin position="550"/>
        <end position="589"/>
    </location>
</feature>
<feature type="repeat" description="WD 7" evidence="1">
    <location>
        <begin position="593"/>
        <end position="623"/>
    </location>
</feature>
<feature type="region of interest" description="Disordered" evidence="2">
    <location>
        <begin position="64"/>
        <end position="93"/>
    </location>
</feature>
<feature type="coiled-coil region" evidence="1">
    <location>
        <begin position="116"/>
        <end position="229"/>
    </location>
</feature>
<feature type="compositionally biased region" description="Basic and acidic residues" evidence="2">
    <location>
        <begin position="64"/>
        <end position="79"/>
    </location>
</feature>
<feature type="splice variant" id="VSP_060643" description="In isoform 3." evidence="7">
    <original>RSASATSLTLSRCVDVVKGLLD</original>
    <variation>S</variation>
    <location>
        <begin position="279"/>
        <end position="300"/>
    </location>
</feature>
<feature type="splice variant" id="VSP_033906" description="In isoform 2." evidence="6">
    <original>GSQVLAAT</original>
    <variation>VRRLCPTA</variation>
    <location>
        <begin position="396"/>
        <end position="403"/>
    </location>
</feature>
<feature type="splice variant" id="VSP_033907" description="In isoform 2." evidence="6">
    <location>
        <begin position="404"/>
        <end position="623"/>
    </location>
</feature>
<dbReference type="EMBL" id="AK131109">
    <property type="protein sequence ID" value="BAD21359.1"/>
    <property type="status" value="ALT_SEQ"/>
    <property type="molecule type" value="Transcribed_RNA"/>
</dbReference>
<dbReference type="EMBL" id="AC107638">
    <property type="status" value="NOT_ANNOTATED_CDS"/>
    <property type="molecule type" value="Genomic_DNA"/>
</dbReference>
<dbReference type="EMBL" id="BC060054">
    <property type="protein sequence ID" value="AAH60054.1"/>
    <property type="status" value="ALT_INIT"/>
    <property type="molecule type" value="mRNA"/>
</dbReference>
<dbReference type="EMBL" id="AB476648">
    <property type="protein sequence ID" value="BAL42360.1"/>
    <property type="molecule type" value="mRNA"/>
</dbReference>
<dbReference type="EMBL" id="AB476647">
    <property type="protein sequence ID" value="BAL42359.1"/>
    <property type="molecule type" value="mRNA"/>
</dbReference>
<dbReference type="CCDS" id="CCDS52329.1">
    <molecule id="Q6KAU8-1"/>
</dbReference>
<dbReference type="RefSeq" id="NP_001104581.1">
    <molecule id="Q6KAU8-1"/>
    <property type="nucleotide sequence ID" value="NM_001111111.1"/>
</dbReference>
<dbReference type="SMR" id="Q6KAU8"/>
<dbReference type="BioGRID" id="216189">
    <property type="interactions" value="2"/>
</dbReference>
<dbReference type="ComplexPortal" id="CPX-355">
    <property type="entry name" value="Atg12-Atg5-Atg16l2 complex"/>
</dbReference>
<dbReference type="FunCoup" id="Q6KAU8">
    <property type="interactions" value="1598"/>
</dbReference>
<dbReference type="STRING" id="10090.ENSMUSP00000112500"/>
<dbReference type="iPTMnet" id="Q6KAU8"/>
<dbReference type="PhosphoSitePlus" id="Q6KAU8"/>
<dbReference type="SwissPalm" id="Q6KAU8"/>
<dbReference type="jPOST" id="Q6KAU8"/>
<dbReference type="PaxDb" id="10090-ENSMUSP00000112500"/>
<dbReference type="ProteomicsDB" id="286033">
    <molecule id="Q6KAU8-1"/>
</dbReference>
<dbReference type="ProteomicsDB" id="286034">
    <molecule id="Q6KAU8-2"/>
</dbReference>
<dbReference type="ProteomicsDB" id="335064"/>
<dbReference type="Antibodypedia" id="30896">
    <property type="antibodies" value="186 antibodies from 26 providers"/>
</dbReference>
<dbReference type="Ensembl" id="ENSMUST00000120267.9">
    <molecule id="Q6KAU8-1"/>
    <property type="protein sequence ID" value="ENSMUSP00000112500.2"/>
    <property type="gene ID" value="ENSMUSG00000047767.18"/>
</dbReference>
<dbReference type="Ensembl" id="ENSMUST00000122116.8">
    <molecule id="Q6KAU8-3"/>
    <property type="protein sequence ID" value="ENSMUSP00000113320.2"/>
    <property type="gene ID" value="ENSMUSG00000047767.18"/>
</dbReference>
<dbReference type="Ensembl" id="ENSMUST00000139609.8">
    <molecule id="Q6KAU8-2"/>
    <property type="protein sequence ID" value="ENSMUSP00000117387.2"/>
    <property type="gene ID" value="ENSMUSG00000047767.18"/>
</dbReference>
<dbReference type="Ensembl" id="ENSMUST00000143630.8">
    <molecule id="Q6KAU8-2"/>
    <property type="protein sequence ID" value="ENSMUSP00000117029.2"/>
    <property type="gene ID" value="ENSMUSG00000047767.18"/>
</dbReference>
<dbReference type="GeneID" id="73683"/>
<dbReference type="KEGG" id="mmu:73683"/>
<dbReference type="UCSC" id="uc009iof.2">
    <molecule id="Q6KAU8-1"/>
    <property type="organism name" value="mouse"/>
</dbReference>
<dbReference type="UCSC" id="uc009iog.2">
    <property type="organism name" value="mouse"/>
</dbReference>
<dbReference type="AGR" id="MGI:1920933"/>
<dbReference type="CTD" id="89849"/>
<dbReference type="MGI" id="MGI:1920933">
    <property type="gene designation" value="Atg16l2"/>
</dbReference>
<dbReference type="VEuPathDB" id="HostDB:ENSMUSG00000047767"/>
<dbReference type="eggNOG" id="KOG0288">
    <property type="taxonomic scope" value="Eukaryota"/>
</dbReference>
<dbReference type="GeneTree" id="ENSGT00940000153936"/>
<dbReference type="HOGENOM" id="CLU_000288_57_10_1"/>
<dbReference type="InParanoid" id="Q6KAU8"/>
<dbReference type="OMA" id="PHCAAIN"/>
<dbReference type="OrthoDB" id="6262491at2759"/>
<dbReference type="PhylomeDB" id="Q6KAU8"/>
<dbReference type="TreeFam" id="TF315541"/>
<dbReference type="BioGRID-ORCS" id="73683">
    <property type="hits" value="4 hits in 79 CRISPR screens"/>
</dbReference>
<dbReference type="ChiTaRS" id="Atg16l2">
    <property type="organism name" value="mouse"/>
</dbReference>
<dbReference type="PRO" id="PR:Q6KAU8"/>
<dbReference type="Proteomes" id="UP000000589">
    <property type="component" value="Chromosome 7"/>
</dbReference>
<dbReference type="RNAct" id="Q6KAU8">
    <property type="molecule type" value="protein"/>
</dbReference>
<dbReference type="Bgee" id="ENSMUSG00000047767">
    <property type="expression patterns" value="Expressed in granulocyte and 153 other cell types or tissues"/>
</dbReference>
<dbReference type="ExpressionAtlas" id="Q6KAU8">
    <property type="expression patterns" value="baseline and differential"/>
</dbReference>
<dbReference type="GO" id="GO:0034274">
    <property type="term" value="C:Atg12-Atg5-Atg16 complex"/>
    <property type="evidence" value="ECO:0000314"/>
    <property type="project" value="ComplexPortal"/>
</dbReference>
<dbReference type="GO" id="GO:0005829">
    <property type="term" value="C:cytosol"/>
    <property type="evidence" value="ECO:0000314"/>
    <property type="project" value="UniProtKB"/>
</dbReference>
<dbReference type="GO" id="GO:0005654">
    <property type="term" value="C:nucleoplasm"/>
    <property type="evidence" value="ECO:0007669"/>
    <property type="project" value="Ensembl"/>
</dbReference>
<dbReference type="GO" id="GO:0034045">
    <property type="term" value="C:phagophore assembly site membrane"/>
    <property type="evidence" value="ECO:0000314"/>
    <property type="project" value="ComplexPortal"/>
</dbReference>
<dbReference type="GO" id="GO:0000045">
    <property type="term" value="P:autophagosome assembly"/>
    <property type="evidence" value="ECO:0000315"/>
    <property type="project" value="ComplexPortal"/>
</dbReference>
<dbReference type="GO" id="GO:0016236">
    <property type="term" value="P:macroautophagy"/>
    <property type="evidence" value="ECO:0000315"/>
    <property type="project" value="ComplexPortal"/>
</dbReference>
<dbReference type="GO" id="GO:0039689">
    <property type="term" value="P:negative stranded viral RNA replication"/>
    <property type="evidence" value="ECO:0000315"/>
    <property type="project" value="MGI"/>
</dbReference>
<dbReference type="GO" id="GO:0015031">
    <property type="term" value="P:protein transport"/>
    <property type="evidence" value="ECO:0007669"/>
    <property type="project" value="UniProtKB-KW"/>
</dbReference>
<dbReference type="CDD" id="cd22887">
    <property type="entry name" value="Atg16_CCD"/>
    <property type="match status" value="1"/>
</dbReference>
<dbReference type="CDD" id="cd00200">
    <property type="entry name" value="WD40"/>
    <property type="match status" value="1"/>
</dbReference>
<dbReference type="FunFam" id="2.130.10.10:FF:000199">
    <property type="entry name" value="autophagy-related protein 16-2 isoform X1"/>
    <property type="match status" value="1"/>
</dbReference>
<dbReference type="Gene3D" id="2.130.10.10">
    <property type="entry name" value="YVTN repeat-like/Quinoprotein amine dehydrogenase"/>
    <property type="match status" value="1"/>
</dbReference>
<dbReference type="InterPro" id="IPR045160">
    <property type="entry name" value="ATG16"/>
</dbReference>
<dbReference type="InterPro" id="IPR013923">
    <property type="entry name" value="Autophagy-rel_prot_16_dom"/>
</dbReference>
<dbReference type="InterPro" id="IPR020472">
    <property type="entry name" value="G-protein_beta_WD-40_rep"/>
</dbReference>
<dbReference type="InterPro" id="IPR015943">
    <property type="entry name" value="WD40/YVTN_repeat-like_dom_sf"/>
</dbReference>
<dbReference type="InterPro" id="IPR019775">
    <property type="entry name" value="WD40_repeat_CS"/>
</dbReference>
<dbReference type="InterPro" id="IPR036322">
    <property type="entry name" value="WD40_repeat_dom_sf"/>
</dbReference>
<dbReference type="InterPro" id="IPR001680">
    <property type="entry name" value="WD40_rpt"/>
</dbReference>
<dbReference type="PANTHER" id="PTHR19878">
    <property type="entry name" value="AUTOPHAGY PROTEIN 16-LIKE"/>
    <property type="match status" value="1"/>
</dbReference>
<dbReference type="PANTHER" id="PTHR19878:SF7">
    <property type="entry name" value="PROTEIN ATG16L2"/>
    <property type="match status" value="1"/>
</dbReference>
<dbReference type="Pfam" id="PF08614">
    <property type="entry name" value="ATG16"/>
    <property type="match status" value="1"/>
</dbReference>
<dbReference type="Pfam" id="PF00400">
    <property type="entry name" value="WD40"/>
    <property type="match status" value="6"/>
</dbReference>
<dbReference type="PRINTS" id="PR00320">
    <property type="entry name" value="GPROTEINBRPT"/>
</dbReference>
<dbReference type="SMART" id="SM00320">
    <property type="entry name" value="WD40"/>
    <property type="match status" value="7"/>
</dbReference>
<dbReference type="SUPFAM" id="SSF50978">
    <property type="entry name" value="WD40 repeat-like"/>
    <property type="match status" value="1"/>
</dbReference>
<dbReference type="PROSITE" id="PS00678">
    <property type="entry name" value="WD_REPEATS_1"/>
    <property type="match status" value="3"/>
</dbReference>
<dbReference type="PROSITE" id="PS50082">
    <property type="entry name" value="WD_REPEATS_2"/>
    <property type="match status" value="4"/>
</dbReference>
<dbReference type="PROSITE" id="PS50294">
    <property type="entry name" value="WD_REPEATS_REGION"/>
    <property type="match status" value="1"/>
</dbReference>
<organism>
    <name type="scientific">Mus musculus</name>
    <name type="common">Mouse</name>
    <dbReference type="NCBI Taxonomy" id="10090"/>
    <lineage>
        <taxon>Eukaryota</taxon>
        <taxon>Metazoa</taxon>
        <taxon>Chordata</taxon>
        <taxon>Craniata</taxon>
        <taxon>Vertebrata</taxon>
        <taxon>Euteleostomi</taxon>
        <taxon>Mammalia</taxon>
        <taxon>Eutheria</taxon>
        <taxon>Euarchontoglires</taxon>
        <taxon>Glires</taxon>
        <taxon>Rodentia</taxon>
        <taxon>Myomorpha</taxon>
        <taxon>Muroidea</taxon>
        <taxon>Muridae</taxon>
        <taxon>Murinae</taxon>
        <taxon>Mus</taxon>
        <taxon>Mus</taxon>
    </lineage>
</organism>
<accession>Q6KAU8</accession>
<accession>D3Z653</accession>
<accession>G9M4M8</accession>
<accession>Q6PAU0</accession>
<name>A16L2_MOUSE</name>
<keyword id="KW-0025">Alternative splicing</keyword>
<keyword id="KW-0175">Coiled coil</keyword>
<keyword id="KW-0963">Cytoplasm</keyword>
<keyword id="KW-0653">Protein transport</keyword>
<keyword id="KW-1185">Reference proteome</keyword>
<keyword id="KW-0677">Repeat</keyword>
<keyword id="KW-0813">Transport</keyword>
<keyword id="KW-0853">WD repeat</keyword>
<proteinExistence type="evidence at protein level"/>
<sequence length="623" mass="69241">MAGPGAPCDPCAPAAVWKRHIVRQLRHRDRTQKALFLELVPAYNHLLEKAELLAKFSEKLKSEPKDAISTRHEDWREEVSGTGPDQVSSPASLRVKWQQEKKGLQLVCGEMAYQVVKKSAALDTLQSQLEERQDRLEALQACVVQLQEARAQQSRQLEERQAENAAQREAYETLLQQAVHQEAALRRLQEEARDLLEQLVQRKARAAAERNLRNERRERANQALVSQELKKAAKRTVSISEIPNTLEDGTKEETVALAPAALPEFSESETCEKWKRPFRSASATSLTLSRCVDVVKGLLDFKKRRGHSVGGAPEQRYQSIPVCVSAQIPSQAQDVLDAHLSEVNAVCFGPNSSLLATGGADRLIHLWNVVGGRLEANQTLEGAGGSITSVDFDPSGSQVLAATYNQAAQLWKVGETQSKETLSGHKDKVTAAKFKLTRHQAVTGSRDRTVKEWDLGRAYCSRTINVLSYCNDVVCGDHIIISGHNDQKIRFWDSRGPHCIQVIPVQGRVTSLHLSYDQLHLLSCSRDNTLKVIDLRISNIRQVFRADGFKCSSDWTKAVFSPDRSYALAGSSNGDLYIWDVNTGKLETSLQGPHCTAVNAVAWCFSGNHVVSVDQGRKVVLWH</sequence>